<gene>
    <name evidence="1" type="primary">hscA</name>
    <name type="ordered locus">Sden_1462</name>
</gene>
<organism>
    <name type="scientific">Shewanella denitrificans (strain OS217 / ATCC BAA-1090 / DSM 15013)</name>
    <dbReference type="NCBI Taxonomy" id="318161"/>
    <lineage>
        <taxon>Bacteria</taxon>
        <taxon>Pseudomonadati</taxon>
        <taxon>Pseudomonadota</taxon>
        <taxon>Gammaproteobacteria</taxon>
        <taxon>Alteromonadales</taxon>
        <taxon>Shewanellaceae</taxon>
        <taxon>Shewanella</taxon>
    </lineage>
</organism>
<sequence>MALLQIAEPGQSAAPHEHRLAVGIDLGTTNSLVAAVRSGEALTLADSEGRHSLPSVVHYGVDSTLVGHDAEALSALFPAQTLVSVKRFMGKSLSDIQAGMQEFPYEFSVSEQGLPLFVMPQGAVNPIQASADILRPLIERAEKTLGGQLQGVVITVPAYFDDAQRQGTKDAAELLGVKVLRLLNEPTAAAIAYGLDSKQEGVIAVYDLGGGTFDISVLRLSGGVFEVLATGGNSALGGDDFDHLLQQHLQAAWGLTSASAQLSRQLLIEARRVKEALTDNDTVTAHVSLDGSDLSLEISKADFEALIATLVKKTISSCRRTLRDAGISTDEVIETVMVGGSTRVPLVRQQVEQFFNKTPLTSIDPDRVVAIGAAIQADILVGNKPDSDLLLLDVIPLSLGIETMGGLVEKVIPRNTTIPVARAQEFTTFKDGQTAMAFHVVQGERELVDDCRSLARFTLTDIPALAAGAAHIRVTFQVDADGLLSVTAMEKSTGVNTSIQVKPSFGLSDLEIATMLKDSMKHAKDDISLRMLTEQKVEAMRVIESLQAALNNDGDLLELSERESLQAALANLGEIAKGNDRDAIEQAIKALDDKTQDFASLRMDNSIKAALKGQSIDNI</sequence>
<dbReference type="EMBL" id="CP000302">
    <property type="protein sequence ID" value="ABE54747.1"/>
    <property type="molecule type" value="Genomic_DNA"/>
</dbReference>
<dbReference type="RefSeq" id="WP_011495905.1">
    <property type="nucleotide sequence ID" value="NC_007954.1"/>
</dbReference>
<dbReference type="SMR" id="Q12P79"/>
<dbReference type="STRING" id="318161.Sden_1462"/>
<dbReference type="KEGG" id="sdn:Sden_1462"/>
<dbReference type="eggNOG" id="COG0443">
    <property type="taxonomic scope" value="Bacteria"/>
</dbReference>
<dbReference type="HOGENOM" id="CLU_005965_2_3_6"/>
<dbReference type="OrthoDB" id="9766019at2"/>
<dbReference type="Proteomes" id="UP000001982">
    <property type="component" value="Chromosome"/>
</dbReference>
<dbReference type="GO" id="GO:0005524">
    <property type="term" value="F:ATP binding"/>
    <property type="evidence" value="ECO:0007669"/>
    <property type="project" value="UniProtKB-KW"/>
</dbReference>
<dbReference type="GO" id="GO:0016887">
    <property type="term" value="F:ATP hydrolysis activity"/>
    <property type="evidence" value="ECO:0007669"/>
    <property type="project" value="UniProtKB-UniRule"/>
</dbReference>
<dbReference type="GO" id="GO:0140662">
    <property type="term" value="F:ATP-dependent protein folding chaperone"/>
    <property type="evidence" value="ECO:0007669"/>
    <property type="project" value="InterPro"/>
</dbReference>
<dbReference type="GO" id="GO:0051082">
    <property type="term" value="F:unfolded protein binding"/>
    <property type="evidence" value="ECO:0007669"/>
    <property type="project" value="InterPro"/>
</dbReference>
<dbReference type="GO" id="GO:0016226">
    <property type="term" value="P:iron-sulfur cluster assembly"/>
    <property type="evidence" value="ECO:0007669"/>
    <property type="project" value="InterPro"/>
</dbReference>
<dbReference type="FunFam" id="3.30.420.40:FF:000046">
    <property type="entry name" value="Chaperone protein HscA"/>
    <property type="match status" value="1"/>
</dbReference>
<dbReference type="FunFam" id="2.60.34.10:FF:000005">
    <property type="entry name" value="Chaperone protein HscA homolog"/>
    <property type="match status" value="1"/>
</dbReference>
<dbReference type="Gene3D" id="1.20.1270.10">
    <property type="match status" value="1"/>
</dbReference>
<dbReference type="Gene3D" id="3.30.420.40">
    <property type="match status" value="2"/>
</dbReference>
<dbReference type="Gene3D" id="3.90.640.10">
    <property type="entry name" value="Actin, Chain A, domain 4"/>
    <property type="match status" value="1"/>
</dbReference>
<dbReference type="Gene3D" id="2.60.34.10">
    <property type="entry name" value="Substrate Binding Domain Of DNAk, Chain A, domain 1"/>
    <property type="match status" value="1"/>
</dbReference>
<dbReference type="HAMAP" id="MF_00679">
    <property type="entry name" value="HscA"/>
    <property type="match status" value="1"/>
</dbReference>
<dbReference type="InterPro" id="IPR043129">
    <property type="entry name" value="ATPase_NBD"/>
</dbReference>
<dbReference type="InterPro" id="IPR018181">
    <property type="entry name" value="Heat_shock_70_CS"/>
</dbReference>
<dbReference type="InterPro" id="IPR029048">
    <property type="entry name" value="HSP70_C_sf"/>
</dbReference>
<dbReference type="InterPro" id="IPR029047">
    <property type="entry name" value="HSP70_peptide-bd_sf"/>
</dbReference>
<dbReference type="InterPro" id="IPR013126">
    <property type="entry name" value="Hsp_70_fam"/>
</dbReference>
<dbReference type="InterPro" id="IPR010236">
    <property type="entry name" value="ISC_FeS_clus_asmbl_HscA"/>
</dbReference>
<dbReference type="NCBIfam" id="TIGR01991">
    <property type="entry name" value="HscA"/>
    <property type="match status" value="1"/>
</dbReference>
<dbReference type="NCBIfam" id="NF003520">
    <property type="entry name" value="PRK05183.1"/>
    <property type="match status" value="1"/>
</dbReference>
<dbReference type="PANTHER" id="PTHR19375">
    <property type="entry name" value="HEAT SHOCK PROTEIN 70KDA"/>
    <property type="match status" value="1"/>
</dbReference>
<dbReference type="Pfam" id="PF00012">
    <property type="entry name" value="HSP70"/>
    <property type="match status" value="1"/>
</dbReference>
<dbReference type="PRINTS" id="PR00301">
    <property type="entry name" value="HEATSHOCK70"/>
</dbReference>
<dbReference type="SUPFAM" id="SSF53067">
    <property type="entry name" value="Actin-like ATPase domain"/>
    <property type="match status" value="2"/>
</dbReference>
<dbReference type="SUPFAM" id="SSF100934">
    <property type="entry name" value="Heat shock protein 70kD (HSP70), C-terminal subdomain"/>
    <property type="match status" value="1"/>
</dbReference>
<dbReference type="SUPFAM" id="SSF100920">
    <property type="entry name" value="Heat shock protein 70kD (HSP70), peptide-binding domain"/>
    <property type="match status" value="1"/>
</dbReference>
<dbReference type="PROSITE" id="PS00297">
    <property type="entry name" value="HSP70_1"/>
    <property type="match status" value="1"/>
</dbReference>
<dbReference type="PROSITE" id="PS00329">
    <property type="entry name" value="HSP70_2"/>
    <property type="match status" value="1"/>
</dbReference>
<comment type="function">
    <text evidence="1">Chaperone involved in the maturation of iron-sulfur cluster-containing proteins. Has a low intrinsic ATPase activity which is markedly stimulated by HscB.</text>
</comment>
<comment type="similarity">
    <text evidence="1">Belongs to the heat shock protein 70 family.</text>
</comment>
<evidence type="ECO:0000255" key="1">
    <source>
        <dbReference type="HAMAP-Rule" id="MF_00679"/>
    </source>
</evidence>
<name>HSCA_SHEDO</name>
<proteinExistence type="inferred from homology"/>
<reference key="1">
    <citation type="submission" date="2006-03" db="EMBL/GenBank/DDBJ databases">
        <title>Complete sequence of Shewanella denitrificans OS217.</title>
        <authorList>
            <consortium name="US DOE Joint Genome Institute"/>
            <person name="Copeland A."/>
            <person name="Lucas S."/>
            <person name="Lapidus A."/>
            <person name="Barry K."/>
            <person name="Detter J.C."/>
            <person name="Glavina del Rio T."/>
            <person name="Hammon N."/>
            <person name="Israni S."/>
            <person name="Dalin E."/>
            <person name="Tice H."/>
            <person name="Pitluck S."/>
            <person name="Brettin T."/>
            <person name="Bruce D."/>
            <person name="Han C."/>
            <person name="Tapia R."/>
            <person name="Gilna P."/>
            <person name="Kiss H."/>
            <person name="Schmutz J."/>
            <person name="Larimer F."/>
            <person name="Land M."/>
            <person name="Hauser L."/>
            <person name="Kyrpides N."/>
            <person name="Lykidis A."/>
            <person name="Richardson P."/>
        </authorList>
    </citation>
    <scope>NUCLEOTIDE SEQUENCE [LARGE SCALE GENOMIC DNA]</scope>
    <source>
        <strain>OS217 / ATCC BAA-1090 / DSM 15013</strain>
    </source>
</reference>
<keyword id="KW-0067">ATP-binding</keyword>
<keyword id="KW-0143">Chaperone</keyword>
<keyword id="KW-0547">Nucleotide-binding</keyword>
<keyword id="KW-1185">Reference proteome</keyword>
<protein>
    <recommendedName>
        <fullName evidence="1">Chaperone protein HscA homolog</fullName>
    </recommendedName>
</protein>
<feature type="chain" id="PRO_1000044887" description="Chaperone protein HscA homolog">
    <location>
        <begin position="1"/>
        <end position="619"/>
    </location>
</feature>
<accession>Q12P79</accession>